<dbReference type="EC" id="3.4.22.-" evidence="5"/>
<dbReference type="GO" id="GO:0009507">
    <property type="term" value="C:chloroplast"/>
    <property type="evidence" value="ECO:0007669"/>
    <property type="project" value="InterPro"/>
</dbReference>
<dbReference type="GO" id="GO:0008234">
    <property type="term" value="F:cysteine-type peptidase activity"/>
    <property type="evidence" value="ECO:0007669"/>
    <property type="project" value="UniProtKB-KW"/>
</dbReference>
<dbReference type="GO" id="GO:0006397">
    <property type="term" value="P:mRNA processing"/>
    <property type="evidence" value="ECO:0007669"/>
    <property type="project" value="UniProtKB-KW"/>
</dbReference>
<dbReference type="GO" id="GO:0006508">
    <property type="term" value="P:proteolysis"/>
    <property type="evidence" value="ECO:0007669"/>
    <property type="project" value="UniProtKB-KW"/>
</dbReference>
<dbReference type="InterPro" id="IPR002866">
    <property type="entry name" value="Maturase_MatK"/>
</dbReference>
<dbReference type="InterPro" id="IPR024942">
    <property type="entry name" value="Maturase_MatK_N"/>
</dbReference>
<dbReference type="PANTHER" id="PTHR34811">
    <property type="entry name" value="MATURASE K"/>
    <property type="match status" value="1"/>
</dbReference>
<dbReference type="PANTHER" id="PTHR34811:SF1">
    <property type="entry name" value="MATURASE K"/>
    <property type="match status" value="1"/>
</dbReference>
<dbReference type="Pfam" id="PF01824">
    <property type="entry name" value="MatK_N"/>
    <property type="match status" value="2"/>
</dbReference>
<accession>P86837</accession>
<proteinExistence type="evidence at protein level"/>
<sequence length="157" mass="18436">DFPPNTCCCICCFIDRMYQQNHFIISSNSNSSNQNKLVSSLEGKVWVQDVPSLHLLRFFLYEYRNWNSFITPKKCESMFVFLRDPFIHYVRYQAKSFLAARGTPLMMNKSQMLENSFLIDIAINKAKFCNALGHPISKPVRVWYLDIIRINDLVNHD</sequence>
<organism>
    <name type="scientific">Euphorbia nivulia</name>
    <name type="common">Leafy milk hedge</name>
    <name type="synonym">Euphorbia varians</name>
    <dbReference type="NCBI Taxonomy" id="334690"/>
    <lineage>
        <taxon>Eukaryota</taxon>
        <taxon>Viridiplantae</taxon>
        <taxon>Streptophyta</taxon>
        <taxon>Embryophyta</taxon>
        <taxon>Tracheophyta</taxon>
        <taxon>Spermatophyta</taxon>
        <taxon>Magnoliopsida</taxon>
        <taxon>eudicotyledons</taxon>
        <taxon>Gunneridae</taxon>
        <taxon>Pentapetalae</taxon>
        <taxon>rosids</taxon>
        <taxon>fabids</taxon>
        <taxon>Malpighiales</taxon>
        <taxon>Euphorbiaceae</taxon>
        <taxon>Euphorbioideae</taxon>
        <taxon>Euphorbieae</taxon>
        <taxon>Euphorbia</taxon>
        <taxon>Euphorbia subgen. Euphorbia</taxon>
        <taxon>Euphorbia sect. Euphorbia</taxon>
    </lineage>
</organism>
<name>NIVU2_EUPNI</name>
<feature type="chain" id="PRO_0000408761" description="Cysteine protease Nivulian-2">
    <location>
        <begin position="1"/>
        <end position="157" status="greater than"/>
    </location>
</feature>
<feature type="non-consecutive residues" evidence="8">
    <location>
        <begin position="12"/>
        <end position="13"/>
    </location>
</feature>
<feature type="non-consecutive residues" evidence="8">
    <location>
        <begin position="36"/>
        <end position="37"/>
    </location>
</feature>
<feature type="non-consecutive residues" evidence="8">
    <location>
        <begin position="44"/>
        <end position="45"/>
    </location>
</feature>
<feature type="non-consecutive residues" evidence="8">
    <location>
        <begin position="74"/>
        <end position="75"/>
    </location>
</feature>
<feature type="non-consecutive residues" evidence="8">
    <location>
        <begin position="83"/>
        <end position="84"/>
    </location>
</feature>
<feature type="non-consecutive residues" evidence="8">
    <location>
        <begin position="109"/>
        <end position="110"/>
    </location>
</feature>
<feature type="non-consecutive residues" evidence="8">
    <location>
        <begin position="125"/>
        <end position="126"/>
    </location>
</feature>
<feature type="non-consecutive residues" evidence="8">
    <location>
        <begin position="141"/>
        <end position="142"/>
    </location>
</feature>
<feature type="non-terminal residue">
    <location>
        <position position="157"/>
    </location>
</feature>
<evidence type="ECO:0000269" key="1">
    <source>
    </source>
</evidence>
<evidence type="ECO:0000269" key="2">
    <source>
    </source>
</evidence>
<evidence type="ECO:0000269" key="3">
    <source>
    </source>
</evidence>
<evidence type="ECO:0000269" key="4">
    <source>
    </source>
</evidence>
<evidence type="ECO:0000269" key="5">
    <source ref="1"/>
</evidence>
<evidence type="ECO:0000303" key="6">
    <source>
    </source>
</evidence>
<evidence type="ECO:0000303" key="7">
    <source ref="1"/>
</evidence>
<evidence type="ECO:0000305" key="8"/>
<keyword id="KW-0903">Direct protein sequencing</keyword>
<keyword id="KW-0325">Glycoprotein</keyword>
<keyword id="KW-0378">Hydrolase</keyword>
<keyword id="KW-0507">mRNA processing</keyword>
<keyword id="KW-0645">Protease</keyword>
<keyword id="KW-0788">Thiol protease</keyword>
<protein>
    <recommendedName>
        <fullName evidence="7">Cysteine protease Nivulian-2</fullName>
    </recommendedName>
    <alternativeName>
        <fullName evidence="7">Nivulian-II</fullName>
        <ecNumber evidence="5">3.4.22.-</ecNumber>
    </alternativeName>
</protein>
<comment type="function">
    <text evidence="3 4 5">Cysteine protease inducing milk clotting by cleaving casein (PubMed:25043129, Ref.1). Exhibits biomedical activities such as wound healing, haemostatic and antibacterial activity, as well as agricultural application in biocontrol process against the infectious management of the root knot nematode Meloidogyne incognita (PubMed:24348183).</text>
</comment>
<comment type="activity regulation">
    <text evidence="3 4 5">Inhibited by HgCl(2), iodoacetamide (IAA) and, to a far lesser extent, by SDS, hydrogen peroxide H(1)O(2), KCl, NaCl, ZnCl(2), AgSO(4), CdCl(2), FeCl(3), PMSF, Pepstatin A and EDTA (PubMed:24348183, PubMed:25043129, Ref.1). Repressed moderately by many organic solvents such as diethyl ether, ethy lacetate, acetophenone, butanol, trichloroethylene, tetrahydrofuran, methanol, chloroform and dichloromethane, and, to a lesser extent, by propanol, benzyl alcohol and chlorobenzene (PubMed:24348183).</text>
</comment>
<comment type="biophysicochemical properties">
    <phDependence>
        <text evidence="3 4 5">Optimum pH is 6.3 (PubMed:25043129, Ref.1). High activity and stability in the pH range from 5.0 to 8.0 (PubMed:24348183).</text>
    </phDependence>
    <temperatureDependence>
        <text evidence="3 4 5">Optimum temperature is 45-50 degrees Celsius (PubMed:24348183, PubMed:25043129, Ref.1). Stable up to 60 degrees Celsius (PubMed:24348183, PubMed:25043129).</text>
    </temperatureDependence>
</comment>
<comment type="subunit">
    <text evidence="4">Monomer.</text>
</comment>
<comment type="tissue specificity">
    <text evidence="2">Accumulates in latex (at protein level).</text>
</comment>
<comment type="PTM">
    <text evidence="2 4">Glycosylated.</text>
</comment>
<comment type="mass spectrometry" mass="43670.848" method="MALDI" evidence="2 4"/>
<comment type="mass spectrometry" mass="43670.848" method="MALDI" evidence="1"/>
<comment type="biotechnology">
    <text evidence="6">Has a potential role in leather processing industry due to its dehairing activity for animal hide without hydrolyzing fibrous protein (PubMed:24348183). May also have application in detergent industries due to its stability and its ability to hydrolyze blood stain (PubMed:24348183).</text>
</comment>
<comment type="miscellaneous">
    <text evidence="4 5">On the 2D-gel the determined pI of this protein is: 3.4, its MW is: 43.67 kDa.</text>
</comment>
<comment type="similarity">
    <text evidence="8">Belongs to the intron maturase 2 family. MatK subfamily.</text>
</comment>
<reference key="1">
    <citation type="journal article" date="2010" name="Green Farming">
        <title>Characterization of milk clotting cysteine protease of Euphorbia nivulia Buch.-Ham. latex.</title>
        <authorList>
            <person name="Badgujar S.B."/>
            <person name="Mahajan R.T."/>
        </authorList>
    </citation>
    <scope>PROTEIN SEQUENCE OF 1-12</scope>
    <scope>FUNCTION</scope>
    <scope>CATALYTIC ACTIVITY</scope>
    <scope>ACTIVITY REGULATION</scope>
    <scope>BIOPHYSICOCHEMICAL PROPERTIES</scope>
    <source>
        <tissue>Latex</tissue>
    </source>
</reference>
<reference key="2">
    <citation type="journal article" date="2013" name="J. Amino Acids">
        <title>Peptide mass fingerprinting and N-terminal amino acid sequencing of glycosylated cysteine protease of Euphorbia nivulia Buch.-Ham.</title>
        <authorList>
            <person name="Badgujar S.B."/>
            <person name="Mahajan R.T."/>
        </authorList>
    </citation>
    <scope>IDENTIFICATION BY MASS SPECTROMETRY</scope>
    <scope>MASS SPECTROMETRY</scope>
</reference>
<reference key="3">
    <citation type="journal article" date="2013" name="ScientificWorldJournal">
        <title>Characterization of thermo- and detergent stable antigenic glycosylated cysteine protease of Euphorbia nivulia Buch.-Ham. and evaluation of its ecofriendly applications.</title>
        <authorList>
            <person name="Badgujar S.B."/>
            <person name="Mahajan R.T."/>
        </authorList>
    </citation>
    <scope>FUNCTION</scope>
    <scope>BIOTECHNOLOGY</scope>
    <scope>BIOPHYSICOCHEMICAL PROPERTIES</scope>
    <scope>ACTIVITY REGULATION</scope>
</reference>
<reference key="4">
    <citation type="journal article" date="2014" name="Int. J. Biol. Macromol.">
        <title>Identification and characterization of Euphorbia nivulia latex proteins.</title>
        <authorList>
            <person name="Badgujar S.B."/>
            <person name="Mahajan R.T."/>
        </authorList>
    </citation>
    <scope>TISSUE SPECIFICITY</scope>
    <scope>IDENTIFICATION BY MASS SPECTROMETRY</scope>
    <scope>MASS SPECTROMETRY</scope>
    <scope>GLYCOSYLATION</scope>
</reference>
<reference key="5">
    <citation type="journal article" date="2014" name="Int. J. Biol. Macromol.">
        <title>Nivulian-II a new milk clotting cysteine protease of Euphorbia nivulia latex.</title>
        <authorList>
            <person name="Badgujar S.B."/>
            <person name="Mahajan R.T."/>
        </authorList>
    </citation>
    <scope>FUNCTION</scope>
    <scope>ACTIVITY REGULATION</scope>
    <scope>SUBUNIT</scope>
    <scope>BIOPHYSICOCHEMICAL PROPERTIES</scope>
    <scope>MASS SPECTROMETRY</scope>
    <scope>GLYCOSYLATION</scope>
</reference>